<name>PDXT_MYCTO</name>
<gene>
    <name evidence="1" type="primary">pdxT</name>
    <name type="ordered locus">MT2679</name>
</gene>
<evidence type="ECO:0000255" key="1">
    <source>
        <dbReference type="HAMAP-Rule" id="MF_01615"/>
    </source>
</evidence>
<dbReference type="EC" id="4.3.3.6" evidence="1"/>
<dbReference type="EC" id="3.5.1.2" evidence="1"/>
<dbReference type="EMBL" id="AE000516">
    <property type="protein sequence ID" value="AAK46995.1"/>
    <property type="molecule type" value="Genomic_DNA"/>
</dbReference>
<dbReference type="PIR" id="C70570">
    <property type="entry name" value="C70570"/>
</dbReference>
<dbReference type="RefSeq" id="WP_003413465.1">
    <property type="nucleotide sequence ID" value="NZ_KK341227.1"/>
</dbReference>
<dbReference type="SMR" id="P9WII6"/>
<dbReference type="KEGG" id="mtc:MT2679"/>
<dbReference type="PATRIC" id="fig|83331.31.peg.2889"/>
<dbReference type="HOGENOM" id="CLU_069674_2_0_11"/>
<dbReference type="UniPathway" id="UPA00245"/>
<dbReference type="Proteomes" id="UP000001020">
    <property type="component" value="Chromosome"/>
</dbReference>
<dbReference type="GO" id="GO:0005829">
    <property type="term" value="C:cytosol"/>
    <property type="evidence" value="ECO:0007669"/>
    <property type="project" value="TreeGrafter"/>
</dbReference>
<dbReference type="GO" id="GO:1903600">
    <property type="term" value="C:glutaminase complex"/>
    <property type="evidence" value="ECO:0007669"/>
    <property type="project" value="TreeGrafter"/>
</dbReference>
<dbReference type="GO" id="GO:0004359">
    <property type="term" value="F:glutaminase activity"/>
    <property type="evidence" value="ECO:0007669"/>
    <property type="project" value="UniProtKB-UniRule"/>
</dbReference>
<dbReference type="GO" id="GO:0036381">
    <property type="term" value="F:pyridoxal 5'-phosphate synthase (glutamine hydrolysing) activity"/>
    <property type="evidence" value="ECO:0007669"/>
    <property type="project" value="UniProtKB-UniRule"/>
</dbReference>
<dbReference type="GO" id="GO:0006543">
    <property type="term" value="P:glutamine catabolic process"/>
    <property type="evidence" value="ECO:0007669"/>
    <property type="project" value="UniProtKB-UniRule"/>
</dbReference>
<dbReference type="GO" id="GO:0042823">
    <property type="term" value="P:pyridoxal phosphate biosynthetic process"/>
    <property type="evidence" value="ECO:0007669"/>
    <property type="project" value="UniProtKB-UniRule"/>
</dbReference>
<dbReference type="GO" id="GO:0008614">
    <property type="term" value="P:pyridoxine metabolic process"/>
    <property type="evidence" value="ECO:0007669"/>
    <property type="project" value="TreeGrafter"/>
</dbReference>
<dbReference type="CDD" id="cd01749">
    <property type="entry name" value="GATase1_PB"/>
    <property type="match status" value="1"/>
</dbReference>
<dbReference type="FunFam" id="3.40.50.880:FF:000010">
    <property type="entry name" value="uncharacterized protein LOC100176842 isoform X2"/>
    <property type="match status" value="1"/>
</dbReference>
<dbReference type="Gene3D" id="3.40.50.880">
    <property type="match status" value="1"/>
</dbReference>
<dbReference type="HAMAP" id="MF_01615">
    <property type="entry name" value="PdxT"/>
    <property type="match status" value="1"/>
</dbReference>
<dbReference type="InterPro" id="IPR029062">
    <property type="entry name" value="Class_I_gatase-like"/>
</dbReference>
<dbReference type="InterPro" id="IPR002161">
    <property type="entry name" value="PdxT/SNO"/>
</dbReference>
<dbReference type="InterPro" id="IPR021196">
    <property type="entry name" value="PdxT/SNO_CS"/>
</dbReference>
<dbReference type="NCBIfam" id="TIGR03800">
    <property type="entry name" value="PLP_synth_Pdx2"/>
    <property type="match status" value="1"/>
</dbReference>
<dbReference type="PANTHER" id="PTHR31559">
    <property type="entry name" value="PYRIDOXAL 5'-PHOSPHATE SYNTHASE SUBUNIT SNO"/>
    <property type="match status" value="1"/>
</dbReference>
<dbReference type="PANTHER" id="PTHR31559:SF0">
    <property type="entry name" value="PYRIDOXAL 5'-PHOSPHATE SYNTHASE SUBUNIT SNO1-RELATED"/>
    <property type="match status" value="1"/>
</dbReference>
<dbReference type="Pfam" id="PF01174">
    <property type="entry name" value="SNO"/>
    <property type="match status" value="1"/>
</dbReference>
<dbReference type="PIRSF" id="PIRSF005639">
    <property type="entry name" value="Glut_amidoT_SNO"/>
    <property type="match status" value="1"/>
</dbReference>
<dbReference type="SUPFAM" id="SSF52317">
    <property type="entry name" value="Class I glutamine amidotransferase-like"/>
    <property type="match status" value="1"/>
</dbReference>
<dbReference type="PROSITE" id="PS01236">
    <property type="entry name" value="PDXT_SNO_1"/>
    <property type="match status" value="1"/>
</dbReference>
<dbReference type="PROSITE" id="PS51130">
    <property type="entry name" value="PDXT_SNO_2"/>
    <property type="match status" value="1"/>
</dbReference>
<sequence length="198" mass="21072">MSVPRVGVLALQGDTREHLAALRECGAEPMTVRRRDELDAVDALVIPGGESTTMSHLLLDLDLLGPLRARLADGLPAYGSCAGMILLASEILDAGAAGRQALPLRAMNMTVRRNAFGSQVDSFEGDIEFAGLDDPVRAVFIRAPWVERVGDGVQVLARAAGHIVAVRQGAVLATAFHPEMTGDRRIHQLFVDIVTSAA</sequence>
<proteinExistence type="inferred from homology"/>
<protein>
    <recommendedName>
        <fullName evidence="1">Pyridoxal 5'-phosphate synthase subunit PdxT</fullName>
        <ecNumber evidence="1">4.3.3.6</ecNumber>
    </recommendedName>
    <alternativeName>
        <fullName evidence="1">Pdx2</fullName>
    </alternativeName>
    <alternativeName>
        <fullName evidence="1">Pyridoxal 5'-phosphate synthase glutaminase subunit</fullName>
        <ecNumber evidence="1">3.5.1.2</ecNumber>
    </alternativeName>
</protein>
<accession>P9WII6</accession>
<accession>L0TAD2</accession>
<accession>O06210</accession>
<accession>Q7D6X1</accession>
<feature type="chain" id="PRO_0000428000" description="Pyridoxal 5'-phosphate synthase subunit PdxT">
    <location>
        <begin position="1"/>
        <end position="198"/>
    </location>
</feature>
<feature type="active site" description="Nucleophile" evidence="1">
    <location>
        <position position="81"/>
    </location>
</feature>
<feature type="active site" description="Charge relay system" evidence="1">
    <location>
        <position position="177"/>
    </location>
</feature>
<feature type="active site" description="Charge relay system" evidence="1">
    <location>
        <position position="179"/>
    </location>
</feature>
<feature type="binding site" evidence="1">
    <location>
        <begin position="49"/>
        <end position="51"/>
    </location>
    <ligand>
        <name>L-glutamine</name>
        <dbReference type="ChEBI" id="CHEBI:58359"/>
    </ligand>
</feature>
<feature type="binding site" evidence="1">
    <location>
        <position position="113"/>
    </location>
    <ligand>
        <name>L-glutamine</name>
        <dbReference type="ChEBI" id="CHEBI:58359"/>
    </ligand>
</feature>
<feature type="binding site" evidence="1">
    <location>
        <begin position="141"/>
        <end position="142"/>
    </location>
    <ligand>
        <name>L-glutamine</name>
        <dbReference type="ChEBI" id="CHEBI:58359"/>
    </ligand>
</feature>
<reference key="1">
    <citation type="journal article" date="2002" name="J. Bacteriol.">
        <title>Whole-genome comparison of Mycobacterium tuberculosis clinical and laboratory strains.</title>
        <authorList>
            <person name="Fleischmann R.D."/>
            <person name="Alland D."/>
            <person name="Eisen J.A."/>
            <person name="Carpenter L."/>
            <person name="White O."/>
            <person name="Peterson J.D."/>
            <person name="DeBoy R.T."/>
            <person name="Dodson R.J."/>
            <person name="Gwinn M.L."/>
            <person name="Haft D.H."/>
            <person name="Hickey E.K."/>
            <person name="Kolonay J.F."/>
            <person name="Nelson W.C."/>
            <person name="Umayam L.A."/>
            <person name="Ermolaeva M.D."/>
            <person name="Salzberg S.L."/>
            <person name="Delcher A."/>
            <person name="Utterback T.R."/>
            <person name="Weidman J.F."/>
            <person name="Khouri H.M."/>
            <person name="Gill J."/>
            <person name="Mikula A."/>
            <person name="Bishai W."/>
            <person name="Jacobs W.R. Jr."/>
            <person name="Venter J.C."/>
            <person name="Fraser C.M."/>
        </authorList>
    </citation>
    <scope>NUCLEOTIDE SEQUENCE [LARGE SCALE GENOMIC DNA]</scope>
    <source>
        <strain>CDC 1551 / Oshkosh</strain>
    </source>
</reference>
<keyword id="KW-0315">Glutamine amidotransferase</keyword>
<keyword id="KW-0378">Hydrolase</keyword>
<keyword id="KW-0456">Lyase</keyword>
<keyword id="KW-0663">Pyridoxal phosphate</keyword>
<keyword id="KW-1185">Reference proteome</keyword>
<comment type="function">
    <text evidence="1">Catalyzes the hydrolysis of glutamine to glutamate and ammonia as part of the biosynthesis of pyridoxal 5'-phosphate. The resulting ammonia molecule is channeled to the active site of PdxS.</text>
</comment>
<comment type="catalytic activity">
    <reaction evidence="1">
        <text>aldehydo-D-ribose 5-phosphate + D-glyceraldehyde 3-phosphate + L-glutamine = pyridoxal 5'-phosphate + L-glutamate + phosphate + 3 H2O + H(+)</text>
        <dbReference type="Rhea" id="RHEA:31507"/>
        <dbReference type="ChEBI" id="CHEBI:15377"/>
        <dbReference type="ChEBI" id="CHEBI:15378"/>
        <dbReference type="ChEBI" id="CHEBI:29985"/>
        <dbReference type="ChEBI" id="CHEBI:43474"/>
        <dbReference type="ChEBI" id="CHEBI:58273"/>
        <dbReference type="ChEBI" id="CHEBI:58359"/>
        <dbReference type="ChEBI" id="CHEBI:59776"/>
        <dbReference type="ChEBI" id="CHEBI:597326"/>
        <dbReference type="EC" id="4.3.3.6"/>
    </reaction>
</comment>
<comment type="catalytic activity">
    <reaction evidence="1">
        <text>L-glutamine + H2O = L-glutamate + NH4(+)</text>
        <dbReference type="Rhea" id="RHEA:15889"/>
        <dbReference type="ChEBI" id="CHEBI:15377"/>
        <dbReference type="ChEBI" id="CHEBI:28938"/>
        <dbReference type="ChEBI" id="CHEBI:29985"/>
        <dbReference type="ChEBI" id="CHEBI:58359"/>
        <dbReference type="EC" id="3.5.1.2"/>
    </reaction>
</comment>
<comment type="pathway">
    <text evidence="1">Cofactor biosynthesis; pyridoxal 5'-phosphate biosynthesis.</text>
</comment>
<comment type="subunit">
    <text evidence="1">In the presence of PdxS, forms a dodecamer of heterodimers. Only shows activity in the heterodimer.</text>
</comment>
<comment type="similarity">
    <text evidence="1">Belongs to the glutaminase PdxT/SNO family.</text>
</comment>
<organism>
    <name type="scientific">Mycobacterium tuberculosis (strain CDC 1551 / Oshkosh)</name>
    <dbReference type="NCBI Taxonomy" id="83331"/>
    <lineage>
        <taxon>Bacteria</taxon>
        <taxon>Bacillati</taxon>
        <taxon>Actinomycetota</taxon>
        <taxon>Actinomycetes</taxon>
        <taxon>Mycobacteriales</taxon>
        <taxon>Mycobacteriaceae</taxon>
        <taxon>Mycobacterium</taxon>
        <taxon>Mycobacterium tuberculosis complex</taxon>
    </lineage>
</organism>